<organism>
    <name type="scientific">Xylella fastidiosa (strain 9a5c)</name>
    <dbReference type="NCBI Taxonomy" id="160492"/>
    <lineage>
        <taxon>Bacteria</taxon>
        <taxon>Pseudomonadati</taxon>
        <taxon>Pseudomonadota</taxon>
        <taxon>Gammaproteobacteria</taxon>
        <taxon>Lysobacterales</taxon>
        <taxon>Lysobacteraceae</taxon>
        <taxon>Xylella</taxon>
    </lineage>
</organism>
<name>SYI_XYLFA</name>
<evidence type="ECO:0000255" key="1">
    <source>
        <dbReference type="HAMAP-Rule" id="MF_02002"/>
    </source>
</evidence>
<proteinExistence type="inferred from homology"/>
<accession>Q9PAS7</accession>
<sequence>MSQDYKTTLHLPATDFPMRGDLPKREPAILERWERDDFYAQLRAHAKGRPLFLLHDGPPYANGQIHLGHAVNKILKDIIIKSKHLDGFDAPYIPGWDCHGLPIEIAIEKKYGKVGVTLDAVQFRQKCREYAAEQIQLQRRDFKRLGIIGDWDAPYKTLDFRFEADEIRALAKIVDKGHLIRGTKPVHWCFDCGSALAEAEIEYTDKTSPMVDVAYPALDPSALAAVFNATLPPDVQLAVPIWTTTPWTLPASLAISVGPTLDYVLVEGPTHSGQRRWLILAEALAAKALARYGIAELLIHGSAKGAAMEQHILAHPFYPDRTIPLLLGNHVSAEDGTGAVHTAPGHGQEDHQVFQQYGLLNHYSAAELNPVDARGVYLPTTPPFSELTLAGLHIWKANPLIVDALRLRGVLLAAAEMHHSYPHCWRHKTPIVFRATPQWFISMEQAALRSAALKAITHVTWYPQWGQARILSMIENRPDWTISRQRTWGVPIPLFVHRHSGAPHPRSAALMRQVADRVEQQGVDIWYSLDQTELLGTEADQYEKITDILDVWFDSGITHEAVLLERGLPKPADLYLEGADQHRGWFQSSLLTGVAMDNAAPYKQCLTHGFTVDQHGRKMSKSLGNGIEPQDIIKTLGADILRLWIASTDYSNEMSLSQEILKRTTDAYRRIRNTARFLLGNLHGFDPTLHLVPLSDMIALDRWIVHRAFELQQTIKAAYTRYDFAEIVQTILNFCSVDLGSLYLDVTKDRLYTMREDAPGRRSAQTAMYHLTAAFVRWIAPILSFTADELWSYLPGDHADNVLFTTWYDGLAPLPPNAPLTAADFDKLLTLRDHVTKVLEPMRANGVIGAALEAEITIAADADTAARWQPLTEELRFLFISGDVTVTPANTDGFFVSAQPTTKAKCARCWHYRADIGAHPTHPELCGRCVTNVDGPGEQRHWF</sequence>
<dbReference type="EC" id="6.1.1.5" evidence="1"/>
<dbReference type="EMBL" id="AE003849">
    <property type="protein sequence ID" value="AAF85217.1"/>
    <property type="molecule type" value="Genomic_DNA"/>
</dbReference>
<dbReference type="PIR" id="C82559">
    <property type="entry name" value="C82559"/>
</dbReference>
<dbReference type="RefSeq" id="WP_010894863.1">
    <property type="nucleotide sequence ID" value="NC_002488.3"/>
</dbReference>
<dbReference type="SMR" id="Q9PAS7"/>
<dbReference type="STRING" id="160492.XF_2418"/>
<dbReference type="KEGG" id="xfa:XF_2418"/>
<dbReference type="eggNOG" id="COG0060">
    <property type="taxonomic scope" value="Bacteria"/>
</dbReference>
<dbReference type="HOGENOM" id="CLU_001493_7_1_6"/>
<dbReference type="Proteomes" id="UP000000812">
    <property type="component" value="Chromosome"/>
</dbReference>
<dbReference type="GO" id="GO:0005829">
    <property type="term" value="C:cytosol"/>
    <property type="evidence" value="ECO:0007669"/>
    <property type="project" value="TreeGrafter"/>
</dbReference>
<dbReference type="GO" id="GO:0002161">
    <property type="term" value="F:aminoacyl-tRNA deacylase activity"/>
    <property type="evidence" value="ECO:0007669"/>
    <property type="project" value="InterPro"/>
</dbReference>
<dbReference type="GO" id="GO:0005524">
    <property type="term" value="F:ATP binding"/>
    <property type="evidence" value="ECO:0007669"/>
    <property type="project" value="UniProtKB-UniRule"/>
</dbReference>
<dbReference type="GO" id="GO:0004822">
    <property type="term" value="F:isoleucine-tRNA ligase activity"/>
    <property type="evidence" value="ECO:0007669"/>
    <property type="project" value="UniProtKB-UniRule"/>
</dbReference>
<dbReference type="GO" id="GO:0000049">
    <property type="term" value="F:tRNA binding"/>
    <property type="evidence" value="ECO:0007669"/>
    <property type="project" value="InterPro"/>
</dbReference>
<dbReference type="GO" id="GO:0008270">
    <property type="term" value="F:zinc ion binding"/>
    <property type="evidence" value="ECO:0007669"/>
    <property type="project" value="UniProtKB-UniRule"/>
</dbReference>
<dbReference type="GO" id="GO:0006428">
    <property type="term" value="P:isoleucyl-tRNA aminoacylation"/>
    <property type="evidence" value="ECO:0007669"/>
    <property type="project" value="UniProtKB-UniRule"/>
</dbReference>
<dbReference type="CDD" id="cd07960">
    <property type="entry name" value="Anticodon_Ia_Ile_BEm"/>
    <property type="match status" value="1"/>
</dbReference>
<dbReference type="FunFam" id="1.10.730.20:FF:000001">
    <property type="entry name" value="Isoleucine--tRNA ligase"/>
    <property type="match status" value="1"/>
</dbReference>
<dbReference type="FunFam" id="3.40.50.620:FF:000042">
    <property type="entry name" value="Isoleucine--tRNA ligase"/>
    <property type="match status" value="1"/>
</dbReference>
<dbReference type="FunFam" id="3.40.50.620:FF:000048">
    <property type="entry name" value="Isoleucine--tRNA ligase"/>
    <property type="match status" value="1"/>
</dbReference>
<dbReference type="FunFam" id="3.90.740.10:FF:000022">
    <property type="entry name" value="Isoleucine--tRNA ligase"/>
    <property type="match status" value="1"/>
</dbReference>
<dbReference type="Gene3D" id="1.10.730.20">
    <property type="match status" value="1"/>
</dbReference>
<dbReference type="Gene3D" id="3.40.50.620">
    <property type="entry name" value="HUPs"/>
    <property type="match status" value="2"/>
</dbReference>
<dbReference type="Gene3D" id="3.90.740.10">
    <property type="entry name" value="Valyl/Leucyl/Isoleucyl-tRNA synthetase, editing domain"/>
    <property type="match status" value="1"/>
</dbReference>
<dbReference type="HAMAP" id="MF_02002">
    <property type="entry name" value="Ile_tRNA_synth_type1"/>
    <property type="match status" value="1"/>
</dbReference>
<dbReference type="InterPro" id="IPR001412">
    <property type="entry name" value="aa-tRNA-synth_I_CS"/>
</dbReference>
<dbReference type="InterPro" id="IPR002300">
    <property type="entry name" value="aa-tRNA-synth_Ia"/>
</dbReference>
<dbReference type="InterPro" id="IPR033708">
    <property type="entry name" value="Anticodon_Ile_BEm"/>
</dbReference>
<dbReference type="InterPro" id="IPR002301">
    <property type="entry name" value="Ile-tRNA-ligase"/>
</dbReference>
<dbReference type="InterPro" id="IPR023585">
    <property type="entry name" value="Ile-tRNA-ligase_type1"/>
</dbReference>
<dbReference type="InterPro" id="IPR050081">
    <property type="entry name" value="Ile-tRNA_ligase"/>
</dbReference>
<dbReference type="InterPro" id="IPR013155">
    <property type="entry name" value="M/V/L/I-tRNA-synth_anticd-bd"/>
</dbReference>
<dbReference type="InterPro" id="IPR014729">
    <property type="entry name" value="Rossmann-like_a/b/a_fold"/>
</dbReference>
<dbReference type="InterPro" id="IPR009080">
    <property type="entry name" value="tRNAsynth_Ia_anticodon-bd"/>
</dbReference>
<dbReference type="InterPro" id="IPR009008">
    <property type="entry name" value="Val/Leu/Ile-tRNA-synth_edit"/>
</dbReference>
<dbReference type="InterPro" id="IPR010663">
    <property type="entry name" value="Znf_FPG/IleRS"/>
</dbReference>
<dbReference type="NCBIfam" id="TIGR00392">
    <property type="entry name" value="ileS"/>
    <property type="match status" value="1"/>
</dbReference>
<dbReference type="PANTHER" id="PTHR42765:SF1">
    <property type="entry name" value="ISOLEUCINE--TRNA LIGASE, MITOCHONDRIAL"/>
    <property type="match status" value="1"/>
</dbReference>
<dbReference type="PANTHER" id="PTHR42765">
    <property type="entry name" value="SOLEUCYL-TRNA SYNTHETASE"/>
    <property type="match status" value="1"/>
</dbReference>
<dbReference type="Pfam" id="PF08264">
    <property type="entry name" value="Anticodon_1"/>
    <property type="match status" value="1"/>
</dbReference>
<dbReference type="Pfam" id="PF00133">
    <property type="entry name" value="tRNA-synt_1"/>
    <property type="match status" value="1"/>
</dbReference>
<dbReference type="Pfam" id="PF06827">
    <property type="entry name" value="zf-FPG_IleRS"/>
    <property type="match status" value="1"/>
</dbReference>
<dbReference type="PRINTS" id="PR00984">
    <property type="entry name" value="TRNASYNTHILE"/>
</dbReference>
<dbReference type="SUPFAM" id="SSF47323">
    <property type="entry name" value="Anticodon-binding domain of a subclass of class I aminoacyl-tRNA synthetases"/>
    <property type="match status" value="1"/>
</dbReference>
<dbReference type="SUPFAM" id="SSF52374">
    <property type="entry name" value="Nucleotidylyl transferase"/>
    <property type="match status" value="1"/>
</dbReference>
<dbReference type="SUPFAM" id="SSF50677">
    <property type="entry name" value="ValRS/IleRS/LeuRS editing domain"/>
    <property type="match status" value="1"/>
</dbReference>
<dbReference type="PROSITE" id="PS00178">
    <property type="entry name" value="AA_TRNA_LIGASE_I"/>
    <property type="match status" value="1"/>
</dbReference>
<keyword id="KW-0030">Aminoacyl-tRNA synthetase</keyword>
<keyword id="KW-0067">ATP-binding</keyword>
<keyword id="KW-0963">Cytoplasm</keyword>
<keyword id="KW-0436">Ligase</keyword>
<keyword id="KW-0479">Metal-binding</keyword>
<keyword id="KW-0547">Nucleotide-binding</keyword>
<keyword id="KW-0648">Protein biosynthesis</keyword>
<keyword id="KW-0862">Zinc</keyword>
<reference key="1">
    <citation type="journal article" date="2000" name="Nature">
        <title>The genome sequence of the plant pathogen Xylella fastidiosa.</title>
        <authorList>
            <person name="Simpson A.J.G."/>
            <person name="Reinach F.C."/>
            <person name="Arruda P."/>
            <person name="Abreu F.A."/>
            <person name="Acencio M."/>
            <person name="Alvarenga R."/>
            <person name="Alves L.M.C."/>
            <person name="Araya J.E."/>
            <person name="Baia G.S."/>
            <person name="Baptista C.S."/>
            <person name="Barros M.H."/>
            <person name="Bonaccorsi E.D."/>
            <person name="Bordin S."/>
            <person name="Bove J.M."/>
            <person name="Briones M.R.S."/>
            <person name="Bueno M.R.P."/>
            <person name="Camargo A.A."/>
            <person name="Camargo L.E.A."/>
            <person name="Carraro D.M."/>
            <person name="Carrer H."/>
            <person name="Colauto N.B."/>
            <person name="Colombo C."/>
            <person name="Costa F.F."/>
            <person name="Costa M.C.R."/>
            <person name="Costa-Neto C.M."/>
            <person name="Coutinho L.L."/>
            <person name="Cristofani M."/>
            <person name="Dias-Neto E."/>
            <person name="Docena C."/>
            <person name="El-Dorry H."/>
            <person name="Facincani A.P."/>
            <person name="Ferreira A.J.S."/>
            <person name="Ferreira V.C.A."/>
            <person name="Ferro J.A."/>
            <person name="Fraga J.S."/>
            <person name="Franca S.C."/>
            <person name="Franco M.C."/>
            <person name="Frohme M."/>
            <person name="Furlan L.R."/>
            <person name="Garnier M."/>
            <person name="Goldman G.H."/>
            <person name="Goldman M.H.S."/>
            <person name="Gomes S.L."/>
            <person name="Gruber A."/>
            <person name="Ho P.L."/>
            <person name="Hoheisel J.D."/>
            <person name="Junqueira M.L."/>
            <person name="Kemper E.L."/>
            <person name="Kitajima J.P."/>
            <person name="Krieger J.E."/>
            <person name="Kuramae E.E."/>
            <person name="Laigret F."/>
            <person name="Lambais M.R."/>
            <person name="Leite L.C.C."/>
            <person name="Lemos E.G.M."/>
            <person name="Lemos M.V.F."/>
            <person name="Lopes S.A."/>
            <person name="Lopes C.R."/>
            <person name="Machado J.A."/>
            <person name="Machado M.A."/>
            <person name="Madeira A.M.B.N."/>
            <person name="Madeira H.M.F."/>
            <person name="Marino C.L."/>
            <person name="Marques M.V."/>
            <person name="Martins E.A.L."/>
            <person name="Martins E.M.F."/>
            <person name="Matsukuma A.Y."/>
            <person name="Menck C.F.M."/>
            <person name="Miracca E.C."/>
            <person name="Miyaki C.Y."/>
            <person name="Monteiro-Vitorello C.B."/>
            <person name="Moon D.H."/>
            <person name="Nagai M.A."/>
            <person name="Nascimento A.L.T.O."/>
            <person name="Netto L.E.S."/>
            <person name="Nhani A. Jr."/>
            <person name="Nobrega F.G."/>
            <person name="Nunes L.R."/>
            <person name="Oliveira M.A."/>
            <person name="de Oliveira M.C."/>
            <person name="de Oliveira R.C."/>
            <person name="Palmieri D.A."/>
            <person name="Paris A."/>
            <person name="Peixoto B.R."/>
            <person name="Pereira G.A.G."/>
            <person name="Pereira H.A. Jr."/>
            <person name="Pesquero J.B."/>
            <person name="Quaggio R.B."/>
            <person name="Roberto P.G."/>
            <person name="Rodrigues V."/>
            <person name="de Rosa A.J.M."/>
            <person name="de Rosa V.E. Jr."/>
            <person name="de Sa R.G."/>
            <person name="Santelli R.V."/>
            <person name="Sawasaki H.E."/>
            <person name="da Silva A.C.R."/>
            <person name="da Silva A.M."/>
            <person name="da Silva F.R."/>
            <person name="Silva W.A. Jr."/>
            <person name="da Silveira J.F."/>
            <person name="Silvestri M.L.Z."/>
            <person name="Siqueira W.J."/>
            <person name="de Souza A.A."/>
            <person name="de Souza A.P."/>
            <person name="Terenzi M.F."/>
            <person name="Truffi D."/>
            <person name="Tsai S.M."/>
            <person name="Tsuhako M.H."/>
            <person name="Vallada H."/>
            <person name="Van Sluys M.A."/>
            <person name="Verjovski-Almeida S."/>
            <person name="Vettore A.L."/>
            <person name="Zago M.A."/>
            <person name="Zatz M."/>
            <person name="Meidanis J."/>
            <person name="Setubal J.C."/>
        </authorList>
    </citation>
    <scope>NUCLEOTIDE SEQUENCE [LARGE SCALE GENOMIC DNA]</scope>
    <source>
        <strain>9a5c</strain>
    </source>
</reference>
<feature type="chain" id="PRO_0000098509" description="Isoleucine--tRNA ligase">
    <location>
        <begin position="1"/>
        <end position="943"/>
    </location>
</feature>
<feature type="short sequence motif" description="'HIGH' region">
    <location>
        <begin position="59"/>
        <end position="69"/>
    </location>
</feature>
<feature type="short sequence motif" description="'KMSKS' region">
    <location>
        <begin position="618"/>
        <end position="622"/>
    </location>
</feature>
<feature type="binding site" evidence="1">
    <location>
        <position position="577"/>
    </location>
    <ligand>
        <name>L-isoleucyl-5'-AMP</name>
        <dbReference type="ChEBI" id="CHEBI:178002"/>
    </ligand>
</feature>
<feature type="binding site" evidence="1">
    <location>
        <position position="621"/>
    </location>
    <ligand>
        <name>ATP</name>
        <dbReference type="ChEBI" id="CHEBI:30616"/>
    </ligand>
</feature>
<feature type="binding site" evidence="1">
    <location>
        <position position="906"/>
    </location>
    <ligand>
        <name>Zn(2+)</name>
        <dbReference type="ChEBI" id="CHEBI:29105"/>
    </ligand>
</feature>
<feature type="binding site" evidence="1">
    <location>
        <position position="909"/>
    </location>
    <ligand>
        <name>Zn(2+)</name>
        <dbReference type="ChEBI" id="CHEBI:29105"/>
    </ligand>
</feature>
<feature type="binding site" evidence="1">
    <location>
        <position position="926"/>
    </location>
    <ligand>
        <name>Zn(2+)</name>
        <dbReference type="ChEBI" id="CHEBI:29105"/>
    </ligand>
</feature>
<feature type="binding site" evidence="1">
    <location>
        <position position="929"/>
    </location>
    <ligand>
        <name>Zn(2+)</name>
        <dbReference type="ChEBI" id="CHEBI:29105"/>
    </ligand>
</feature>
<comment type="function">
    <text evidence="1">Catalyzes the attachment of isoleucine to tRNA(Ile). As IleRS can inadvertently accommodate and process structurally similar amino acids such as valine, to avoid such errors it has two additional distinct tRNA(Ile)-dependent editing activities. One activity is designated as 'pretransfer' editing and involves the hydrolysis of activated Val-AMP. The other activity is designated 'posttransfer' editing and involves deacylation of mischarged Val-tRNA(Ile).</text>
</comment>
<comment type="catalytic activity">
    <reaction evidence="1">
        <text>tRNA(Ile) + L-isoleucine + ATP = L-isoleucyl-tRNA(Ile) + AMP + diphosphate</text>
        <dbReference type="Rhea" id="RHEA:11060"/>
        <dbReference type="Rhea" id="RHEA-COMP:9666"/>
        <dbReference type="Rhea" id="RHEA-COMP:9695"/>
        <dbReference type="ChEBI" id="CHEBI:30616"/>
        <dbReference type="ChEBI" id="CHEBI:33019"/>
        <dbReference type="ChEBI" id="CHEBI:58045"/>
        <dbReference type="ChEBI" id="CHEBI:78442"/>
        <dbReference type="ChEBI" id="CHEBI:78528"/>
        <dbReference type="ChEBI" id="CHEBI:456215"/>
        <dbReference type="EC" id="6.1.1.5"/>
    </reaction>
</comment>
<comment type="cofactor">
    <cofactor evidence="1">
        <name>Zn(2+)</name>
        <dbReference type="ChEBI" id="CHEBI:29105"/>
    </cofactor>
    <text evidence="1">Binds 1 zinc ion per subunit.</text>
</comment>
<comment type="subunit">
    <text evidence="1">Monomer.</text>
</comment>
<comment type="subcellular location">
    <subcellularLocation>
        <location evidence="1">Cytoplasm</location>
    </subcellularLocation>
</comment>
<comment type="domain">
    <text evidence="1">IleRS has two distinct active sites: one for aminoacylation and one for editing. The misactivated valine is translocated from the active site to the editing site, which sterically excludes the correctly activated isoleucine. The single editing site contains two valyl binding pockets, one specific for each substrate (Val-AMP or Val-tRNA(Ile)).</text>
</comment>
<comment type="similarity">
    <text evidence="1">Belongs to the class-I aminoacyl-tRNA synthetase family. IleS type 1 subfamily.</text>
</comment>
<protein>
    <recommendedName>
        <fullName evidence="1">Isoleucine--tRNA ligase</fullName>
        <ecNumber evidence="1">6.1.1.5</ecNumber>
    </recommendedName>
    <alternativeName>
        <fullName evidence="1">Isoleucyl-tRNA synthetase</fullName>
        <shortName evidence="1">IleRS</shortName>
    </alternativeName>
</protein>
<gene>
    <name evidence="1" type="primary">ileS</name>
    <name type="ordered locus">XF_2418</name>
</gene>